<dbReference type="EMBL" id="BA000022">
    <property type="protein sequence ID" value="BAA10311.1"/>
    <property type="molecule type" value="Genomic_DNA"/>
</dbReference>
<dbReference type="PIR" id="S74393">
    <property type="entry name" value="S74393"/>
</dbReference>
<dbReference type="PDB" id="6WJ6">
    <property type="method" value="EM"/>
    <property type="resolution" value="2.58 A"/>
    <property type="chains" value="X=1-39"/>
</dbReference>
<dbReference type="PDB" id="7N8O">
    <property type="method" value="EM"/>
    <property type="resolution" value="1.93 A"/>
    <property type="chains" value="X/x=1-38"/>
</dbReference>
<dbReference type="PDB" id="7RCV">
    <property type="method" value="EM"/>
    <property type="resolution" value="2.01 A"/>
    <property type="chains" value="X/x=1-38"/>
</dbReference>
<dbReference type="PDB" id="8TOW">
    <property type="method" value="EM"/>
    <property type="resolution" value="2.14 A"/>
    <property type="chains" value="X/x=1-39"/>
</dbReference>
<dbReference type="PDB" id="9EH5">
    <property type="method" value="EM"/>
    <property type="resolution" value="1.97 A"/>
    <property type="chains" value="X/x=1-39"/>
</dbReference>
<dbReference type="PDBsum" id="6WJ6"/>
<dbReference type="PDBsum" id="7N8O"/>
<dbReference type="PDBsum" id="7RCV"/>
<dbReference type="PDBsum" id="8TOW"/>
<dbReference type="PDBsum" id="9EH5"/>
<dbReference type="EMDB" id="EMD-21690"/>
<dbReference type="EMDB" id="EMD-24239"/>
<dbReference type="EMDB" id="EMD-24407"/>
<dbReference type="EMDB" id="EMD-41460"/>
<dbReference type="EMDB" id="EMD-48046"/>
<dbReference type="SMR" id="P72575"/>
<dbReference type="IntAct" id="P72575">
    <property type="interactions" value="1"/>
</dbReference>
<dbReference type="STRING" id="1148.gene:10499811"/>
<dbReference type="PaxDb" id="1148-1673306"/>
<dbReference type="EnsemblBacteria" id="BAA10311">
    <property type="protein sequence ID" value="BAA10311"/>
    <property type="gene ID" value="BAA10311"/>
</dbReference>
<dbReference type="KEGG" id="syn:sml0002"/>
<dbReference type="eggNOG" id="ENOG5033AJK">
    <property type="taxonomic scope" value="Bacteria"/>
</dbReference>
<dbReference type="InParanoid" id="P72575"/>
<dbReference type="BioCyc" id="MetaCyc:PSBX-MONOMER"/>
<dbReference type="Proteomes" id="UP000001425">
    <property type="component" value="Chromosome"/>
</dbReference>
<dbReference type="GO" id="GO:0031676">
    <property type="term" value="C:plasma membrane-derived thylakoid membrane"/>
    <property type="evidence" value="ECO:0007669"/>
    <property type="project" value="UniProtKB-SubCell"/>
</dbReference>
<dbReference type="GO" id="GO:0030096">
    <property type="term" value="C:plasma membrane-derived thylakoid photosystem II"/>
    <property type="evidence" value="ECO:0000314"/>
    <property type="project" value="UniProtKB"/>
</dbReference>
<dbReference type="GO" id="GO:0015979">
    <property type="term" value="P:photosynthesis"/>
    <property type="evidence" value="ECO:0007669"/>
    <property type="project" value="UniProtKB-UniRule"/>
</dbReference>
<dbReference type="Gene3D" id="1.20.5.510">
    <property type="entry name" value="Single helix bin"/>
    <property type="match status" value="1"/>
</dbReference>
<dbReference type="HAMAP" id="MF_01386">
    <property type="entry name" value="PSII_PsbX_1"/>
    <property type="match status" value="1"/>
</dbReference>
<dbReference type="InterPro" id="IPR009518">
    <property type="entry name" value="PSII_PsbX"/>
</dbReference>
<dbReference type="InterPro" id="IPR023431">
    <property type="entry name" value="PSII_PsbX_type_1_subfam"/>
</dbReference>
<dbReference type="Pfam" id="PF06596">
    <property type="entry name" value="PsbX"/>
    <property type="match status" value="1"/>
</dbReference>
<name>PSBX_SYNY3</name>
<keyword id="KW-0002">3D-structure</keyword>
<keyword id="KW-0903">Direct protein sequencing</keyword>
<keyword id="KW-0472">Membrane</keyword>
<keyword id="KW-0602">Photosynthesis</keyword>
<keyword id="KW-0604">Photosystem II</keyword>
<keyword id="KW-1185">Reference proteome</keyword>
<keyword id="KW-0793">Thylakoid</keyword>
<keyword id="KW-0812">Transmembrane</keyword>
<keyword id="KW-1133">Transmembrane helix</keyword>
<proteinExistence type="evidence at protein level"/>
<organism>
    <name type="scientific">Synechocystis sp. (strain ATCC 27184 / PCC 6803 / Kazusa)</name>
    <dbReference type="NCBI Taxonomy" id="1111708"/>
    <lineage>
        <taxon>Bacteria</taxon>
        <taxon>Bacillati</taxon>
        <taxon>Cyanobacteriota</taxon>
        <taxon>Cyanophyceae</taxon>
        <taxon>Synechococcales</taxon>
        <taxon>Merismopediaceae</taxon>
        <taxon>Synechocystis</taxon>
    </lineage>
</organism>
<sequence length="39" mass="4186">MTPSLANFLWSLVLGAAIVLIPATVGLIFISQKDKITRS</sequence>
<evidence type="ECO:0000255" key="1">
    <source>
        <dbReference type="HAMAP-Rule" id="MF_01386"/>
    </source>
</evidence>
<evidence type="ECO:0000269" key="2">
    <source>
    </source>
</evidence>
<evidence type="ECO:0000269" key="3">
    <source>
    </source>
</evidence>
<evidence type="ECO:0000269" key="4">
    <source>
    </source>
</evidence>
<evidence type="ECO:0000269" key="5">
    <source>
    </source>
</evidence>
<evidence type="ECO:0000305" key="6"/>
<evidence type="ECO:0000312" key="7">
    <source>
        <dbReference type="PDB" id="7N8O"/>
    </source>
</evidence>
<evidence type="ECO:0007744" key="8">
    <source>
        <dbReference type="PDB" id="7N8O"/>
    </source>
</evidence>
<evidence type="ECO:0007744" key="9">
    <source>
        <dbReference type="PDB" id="7RCV"/>
    </source>
</evidence>
<evidence type="ECO:0007829" key="10">
    <source>
        <dbReference type="PDB" id="7N8O"/>
    </source>
</evidence>
<comment type="function">
    <text evidence="2 4">Involved in the binding and/or turnover of quinones at the Q(B) site of photosystem II (PSII) (PubMed:11202442, PubMed:34890576). PSII is a light-driven water plastoquinone oxidoreductase, using light energy to abstract electrons from H(2)O, generating a proton gradient subsequently used for ATP formation.</text>
</comment>
<comment type="subunit">
    <text evidence="1 3 5">PSII is composed of 1 copy each of membrane proteins PsbA, PsbB, PsbC, PsbD, PsbE, PsbF, PsbH, PsbI, PsbJ, PsbK, PsbL, PsbM, PsbT, PsbX, PsbY, PsbZ, Psb30/Ycf12, peripheral proteins PsbO, CyanoQ (PsbQ), PsbU, PsbV and a large number of cofactors. It forms dimeric complexes.</text>
</comment>
<comment type="subcellular location">
    <subcellularLocation>
        <location evidence="1 3 5">Cellular thylakoid membrane</location>
        <topology evidence="1 5">Single-pass membrane protein</topology>
    </subcellularLocation>
</comment>
<comment type="induction">
    <text evidence="2">By high-light stress.</text>
</comment>
<comment type="disruption phenotype">
    <text evidence="2 4">Cells have about 30% less PSII and a minor uncoupling of the antenna (PubMed:11202442). Modifies the quinone Q(B) binding site, increased sensitivity to high light (2000 umol photons/m(2)/s); the PSII dimer is less stable under high light (PubMed:34890576).</text>
</comment>
<comment type="similarity">
    <text evidence="1 6">Belongs to the PsbX family. Type 1 subfamily.</text>
</comment>
<protein>
    <recommendedName>
        <fullName evidence="1">Photosystem II reaction center protein X</fullName>
    </recommendedName>
</protein>
<feature type="chain" id="PRO_0000345385" description="Photosystem II reaction center protein X">
    <location>
        <begin position="1"/>
        <end position="39"/>
    </location>
</feature>
<feature type="transmembrane region" description="Helical" evidence="5 7">
    <location>
        <begin position="5"/>
        <end position="28"/>
    </location>
</feature>
<feature type="helix" evidence="10">
    <location>
        <begin position="3"/>
        <end position="18"/>
    </location>
</feature>
<feature type="helix" evidence="10">
    <location>
        <begin position="20"/>
        <end position="33"/>
    </location>
</feature>
<accession>P72575</accession>
<gene>
    <name evidence="1" type="primary">psbX</name>
    <name type="ordered locus">sml0002</name>
</gene>
<reference key="1">
    <citation type="journal article" date="1996" name="DNA Res.">
        <title>Sequence analysis of the genome of the unicellular cyanobacterium Synechocystis sp. strain PCC6803. II. Sequence determination of the entire genome and assignment of potential protein-coding regions.</title>
        <authorList>
            <person name="Kaneko T."/>
            <person name="Sato S."/>
            <person name="Kotani H."/>
            <person name="Tanaka A."/>
            <person name="Asamizu E."/>
            <person name="Nakamura Y."/>
            <person name="Miyajima N."/>
            <person name="Hirosawa M."/>
            <person name="Sugiura M."/>
            <person name="Sasamoto S."/>
            <person name="Kimura T."/>
            <person name="Hosouchi T."/>
            <person name="Matsuno A."/>
            <person name="Muraki A."/>
            <person name="Nakazaki N."/>
            <person name="Naruo K."/>
            <person name="Okumura S."/>
            <person name="Shimpo S."/>
            <person name="Takeuchi C."/>
            <person name="Wada T."/>
            <person name="Watanabe A."/>
            <person name="Yamada M."/>
            <person name="Yasuda M."/>
            <person name="Tabata S."/>
        </authorList>
    </citation>
    <scope>NUCLEOTIDE SEQUENCE [LARGE SCALE GENOMIC DNA]</scope>
    <source>
        <strain>ATCC 27184 / PCC 6803 / Kazusa</strain>
    </source>
</reference>
<reference key="2">
    <citation type="journal article" date="2002" name="Biochemistry">
        <title>Proteomic analysis of a highly active photosystem II preparation from the cyanobacterium Synechocystis sp. PCC 6803 reveals the presence of novel polypeptides.</title>
        <authorList>
            <person name="Kashino Y."/>
            <person name="Lauber W.M."/>
            <person name="Carroll J.A."/>
            <person name="Wang Q."/>
            <person name="Whitmarsh J."/>
            <person name="Satoh K."/>
            <person name="Pakrasi H.B."/>
        </authorList>
    </citation>
    <scope>PROTEIN SEQUENCE OF 1-9</scope>
    <scope>SUBUNIT</scope>
    <scope>SUBCELLULAR LOCATION</scope>
    <source>
        <strain>ATCC 27184 / PCC 6803 / Kazusa</strain>
    </source>
</reference>
<reference key="3">
    <citation type="journal article" date="2000" name="Plant Mol. Biol.">
        <title>Functional analysis of the PsbX protein by deletion of the corresponding gene in Synechocystis sp. PCC 6803.</title>
        <authorList>
            <person name="Funk C."/>
        </authorList>
    </citation>
    <scope>FUNCTION</scope>
    <scope>INDUCTION</scope>
    <scope>DISRUPTION PHENOTYPE</scope>
    <source>
        <strain>ATCC 27184 / PCC 6803 / Kazusa</strain>
    </source>
</reference>
<reference key="4">
    <citation type="journal article" date="2022" name="Biochim. Biophys. Acta">
        <title>PsbX maintains efficient electron transport in Photosystem II and reduces susceptibility to high light in Synechocystis sp. PCC 6803.</title>
        <authorList>
            <person name="Biswas S."/>
            <person name="Eaton-Rye J.J."/>
        </authorList>
    </citation>
    <scope>FUNCTION</scope>
    <scope>DISRUPTION PHENOTYPE</scope>
    <source>
        <strain>ATCC 27184 / PCC 6803 / Kazusa</strain>
    </source>
</reference>
<reference evidence="8 9" key="5">
    <citation type="journal article" date="2022" name="Proc. Natl. Acad. Sci. U.S.A.">
        <title>High-resolution cryo-electron microscopy structure of photosystem II from the mesophilic cyanobacterium, Synechocystis sp. PCC 6803.</title>
        <authorList>
            <person name="Gisriel C.J."/>
            <person name="Wang J."/>
            <person name="Liu J."/>
            <person name="Flesher D.A."/>
            <person name="Reiss K.M."/>
            <person name="Huang H.L."/>
            <person name="Yang K.R."/>
            <person name="Armstrong W.H."/>
            <person name="Gunner M.R."/>
            <person name="Batista V.S."/>
            <person name="Debus R.J."/>
            <person name="Brudvig G.W."/>
        </authorList>
    </citation>
    <scope>STRUCTURE BY ELECTRON MICROSCOPY (1.93 ANGSTROMS) OF 1-38</scope>
    <scope>FUNCTION</scope>
    <scope>SUBUNIT</scope>
    <scope>SUBCELLULAR LOCATION</scope>
    <source>
        <strain>ATCC 27184 / PCC 6803 / Kazusa</strain>
    </source>
</reference>